<protein>
    <recommendedName>
        <fullName>mRNA decay factor CTH1</fullName>
    </recommendedName>
    <alternativeName>
        <fullName>Cysteine-three-histidine protein 1</fullName>
    </alternativeName>
</protein>
<proteinExistence type="evidence at protein level"/>
<evidence type="ECO:0000255" key="1">
    <source>
        <dbReference type="PROSITE-ProRule" id="PRU00723"/>
    </source>
</evidence>
<evidence type="ECO:0000256" key="2">
    <source>
        <dbReference type="SAM" id="MobiDB-lite"/>
    </source>
</evidence>
<evidence type="ECO:0000269" key="3">
    <source>
    </source>
</evidence>
<evidence type="ECO:0000305" key="4"/>
<dbReference type="EMBL" id="L42133">
    <property type="protein sequence ID" value="AAB39897.1"/>
    <property type="molecule type" value="Genomic_DNA"/>
</dbReference>
<dbReference type="EMBL" id="Z50046">
    <property type="protein sequence ID" value="CAA90373.1"/>
    <property type="molecule type" value="Genomic_DNA"/>
</dbReference>
<dbReference type="EMBL" id="AY557690">
    <property type="protein sequence ID" value="AAS56016.1"/>
    <property type="molecule type" value="Genomic_DNA"/>
</dbReference>
<dbReference type="EMBL" id="BK006938">
    <property type="protein sequence ID" value="DAA11993.1"/>
    <property type="molecule type" value="Genomic_DNA"/>
</dbReference>
<dbReference type="PIR" id="S57977">
    <property type="entry name" value="S57977"/>
</dbReference>
<dbReference type="RefSeq" id="NP_010435.1">
    <property type="nucleotide sequence ID" value="NM_001180458.1"/>
</dbReference>
<dbReference type="SMR" id="P47976"/>
<dbReference type="BioGRID" id="32204">
    <property type="interactions" value="61"/>
</dbReference>
<dbReference type="DIP" id="DIP-1784N"/>
<dbReference type="FunCoup" id="P47976">
    <property type="interactions" value="54"/>
</dbReference>
<dbReference type="IntAct" id="P47976">
    <property type="interactions" value="5"/>
</dbReference>
<dbReference type="MINT" id="P47976"/>
<dbReference type="STRING" id="4932.YDR151C"/>
<dbReference type="iPTMnet" id="P47976"/>
<dbReference type="PaxDb" id="4932-YDR151C"/>
<dbReference type="PeptideAtlas" id="P47976"/>
<dbReference type="EnsemblFungi" id="YDR151C_mRNA">
    <property type="protein sequence ID" value="YDR151C"/>
    <property type="gene ID" value="YDR151C"/>
</dbReference>
<dbReference type="GeneID" id="851729"/>
<dbReference type="KEGG" id="sce:YDR151C"/>
<dbReference type="AGR" id="SGD:S000002558"/>
<dbReference type="SGD" id="S000002558">
    <property type="gene designation" value="CTH1"/>
</dbReference>
<dbReference type="VEuPathDB" id="FungiDB:YDR151C"/>
<dbReference type="eggNOG" id="KOG1677">
    <property type="taxonomic scope" value="Eukaryota"/>
</dbReference>
<dbReference type="GeneTree" id="ENSGT00940000170800"/>
<dbReference type="HOGENOM" id="CLU_060370_0_0_1"/>
<dbReference type="InParanoid" id="P47976"/>
<dbReference type="OMA" id="KPCINWS"/>
<dbReference type="OrthoDB" id="410307at2759"/>
<dbReference type="BioCyc" id="YEAST:G3O-29745-MONOMER"/>
<dbReference type="Reactome" id="R-SCE-450385">
    <property type="pathway name" value="Butyrate Response Factor 1 (BRF1) binds and destabilizes mRNA"/>
</dbReference>
<dbReference type="Reactome" id="R-SCE-450513">
    <property type="pathway name" value="Tristetraprolin (TTP, ZFP36) binds and destabilizes mRNA"/>
</dbReference>
<dbReference type="BioGRID-ORCS" id="851729">
    <property type="hits" value="1 hit in 10 CRISPR screens"/>
</dbReference>
<dbReference type="ChiTaRS" id="CTL1">
    <property type="organism name" value="yeast"/>
</dbReference>
<dbReference type="PRO" id="PR:P47976"/>
<dbReference type="Proteomes" id="UP000002311">
    <property type="component" value="Chromosome IV"/>
</dbReference>
<dbReference type="RNAct" id="P47976">
    <property type="molecule type" value="protein"/>
</dbReference>
<dbReference type="GO" id="GO:0005634">
    <property type="term" value="C:nucleus"/>
    <property type="evidence" value="ECO:0000305"/>
    <property type="project" value="SGD"/>
</dbReference>
<dbReference type="GO" id="GO:0003729">
    <property type="term" value="F:mRNA binding"/>
    <property type="evidence" value="ECO:0000250"/>
    <property type="project" value="SGD"/>
</dbReference>
<dbReference type="GO" id="GO:0008270">
    <property type="term" value="F:zinc ion binding"/>
    <property type="evidence" value="ECO:0007669"/>
    <property type="project" value="UniProtKB-KW"/>
</dbReference>
<dbReference type="GO" id="GO:0006879">
    <property type="term" value="P:intracellular iron ion homeostasis"/>
    <property type="evidence" value="ECO:0000316"/>
    <property type="project" value="SGD"/>
</dbReference>
<dbReference type="GO" id="GO:0000956">
    <property type="term" value="P:nuclear-transcribed mRNA catabolic process"/>
    <property type="evidence" value="ECO:0000316"/>
    <property type="project" value="SGD"/>
</dbReference>
<dbReference type="FunFam" id="4.10.1000.10:FF:000001">
    <property type="entry name" value="zinc finger CCCH domain-containing protein 15-like"/>
    <property type="match status" value="1"/>
</dbReference>
<dbReference type="FunFam" id="4.10.1000.10:FF:000018">
    <property type="entry name" value="Zinc finger protein"/>
    <property type="match status" value="1"/>
</dbReference>
<dbReference type="Gene3D" id="4.10.1000.10">
    <property type="entry name" value="Zinc finger, CCCH-type"/>
    <property type="match status" value="2"/>
</dbReference>
<dbReference type="InterPro" id="IPR045877">
    <property type="entry name" value="ZFP36-like"/>
</dbReference>
<dbReference type="InterPro" id="IPR000571">
    <property type="entry name" value="Znf_CCCH"/>
</dbReference>
<dbReference type="InterPro" id="IPR036855">
    <property type="entry name" value="Znf_CCCH_sf"/>
</dbReference>
<dbReference type="PANTHER" id="PTHR12547">
    <property type="entry name" value="CCCH ZINC FINGER/TIS11-RELATED"/>
    <property type="match status" value="1"/>
</dbReference>
<dbReference type="PANTHER" id="PTHR12547:SF18">
    <property type="entry name" value="PROTEIN TIS11"/>
    <property type="match status" value="1"/>
</dbReference>
<dbReference type="Pfam" id="PF00642">
    <property type="entry name" value="zf-CCCH"/>
    <property type="match status" value="2"/>
</dbReference>
<dbReference type="SMART" id="SM00356">
    <property type="entry name" value="ZnF_C3H1"/>
    <property type="match status" value="2"/>
</dbReference>
<dbReference type="SUPFAM" id="SSF90229">
    <property type="entry name" value="CCCH zinc finger"/>
    <property type="match status" value="2"/>
</dbReference>
<dbReference type="PROSITE" id="PS50103">
    <property type="entry name" value="ZF_C3H1"/>
    <property type="match status" value="2"/>
</dbReference>
<comment type="function">
    <text evidence="3">Binds to specific AU-rich elements (ARE) in the 3'-untranslated region of target mRNAs and promotes their degradation. In response to iron deficiency, promotes the decay of many mRNAs encoding proteins involved in iron-dependent pathways. Negatively regulates primarily iron-dependent mitochondrial processes including respiration and amino acid biosynthesis.</text>
</comment>
<comment type="induction">
    <text evidence="3">By transcription factors AFT1 and AFT2 in response to iron deficiency.</text>
</comment>
<accession>P47976</accession>
<accession>D6VSD3</accession>
<keyword id="KW-0479">Metal-binding</keyword>
<keyword id="KW-1185">Reference proteome</keyword>
<keyword id="KW-0677">Repeat</keyword>
<keyword id="KW-0694">RNA-binding</keyword>
<keyword id="KW-0862">Zinc</keyword>
<keyword id="KW-0863">Zinc-finger</keyword>
<gene>
    <name type="primary">CTH1</name>
    <name type="ordered locus">YDR151C</name>
    <name type="ORF">YD8358.07C</name>
</gene>
<name>CTH1_YEAST</name>
<organism>
    <name type="scientific">Saccharomyces cerevisiae (strain ATCC 204508 / S288c)</name>
    <name type="common">Baker's yeast</name>
    <dbReference type="NCBI Taxonomy" id="559292"/>
    <lineage>
        <taxon>Eukaryota</taxon>
        <taxon>Fungi</taxon>
        <taxon>Dikarya</taxon>
        <taxon>Ascomycota</taxon>
        <taxon>Saccharomycotina</taxon>
        <taxon>Saccharomycetes</taxon>
        <taxon>Saccharomycetales</taxon>
        <taxon>Saccharomycetaceae</taxon>
        <taxon>Saccharomyces</taxon>
    </lineage>
</organism>
<sequence length="325" mass="36772">MMPNVAPNSYYLNIPNANSTSTTTSSIFSDLNKEYESKIKEIEEYYIKTLLNENTDNDDSSSSEGHNINETDILSEYSPRPSPWLPSKPNCYHPLGDFKDLIISDSRPTNTLPINNPFAGNNNISTLATTEKKRKKRSLEVEINPTYTTSAFSLPLTAENLQKLSQVDSQSTGLPYTLPIQKTTKLEPCRRAPLQLPQLVNKTLYKTELCESFTIKGYCKYGNKCQFAHGLNELKFKKKSNNYRTKPCINWSKLGYCPYGKRCCFKHGDDKDVEIYQNANDGRSKDTALTPLPTSLAPSNNDNITNLSKPRNLHTSVKALQRMTW</sequence>
<feature type="chain" id="PRO_0000089173" description="mRNA decay factor CTH1">
    <location>
        <begin position="1"/>
        <end position="325"/>
    </location>
</feature>
<feature type="zinc finger region" description="C3H1-type 1" evidence="1">
    <location>
        <begin position="204"/>
        <end position="232"/>
    </location>
</feature>
<feature type="zinc finger region" description="C3H1-type 2" evidence="1">
    <location>
        <begin position="242"/>
        <end position="270"/>
    </location>
</feature>
<feature type="region of interest" description="Disordered" evidence="2">
    <location>
        <begin position="284"/>
        <end position="306"/>
    </location>
</feature>
<feature type="compositionally biased region" description="Polar residues" evidence="2">
    <location>
        <begin position="292"/>
        <end position="306"/>
    </location>
</feature>
<feature type="mutagenesis site" description="Abolishes mRNA binding." evidence="3">
    <original>C</original>
    <variation>R</variation>
    <location>
        <position position="225"/>
    </location>
</feature>
<feature type="sequence conflict" description="In Ref. 1; AAB39897." evidence="4" ref="1">
    <original>EI</original>
    <variation>RV</variation>
    <location>
        <begin position="142"/>
        <end position="143"/>
    </location>
</feature>
<reference key="1">
    <citation type="journal article" date="1996" name="Gene">
        <title>Cloning and characterization of two yeast genes encoding members of the CCCH class of zinc finger proteins: zinc finger-mediated impairment of cell growth.</title>
        <authorList>
            <person name="Thompson M.J."/>
            <person name="Lai W.S."/>
            <person name="Taylor G.A."/>
            <person name="Blackshear P.J."/>
        </authorList>
    </citation>
    <scope>NUCLEOTIDE SEQUENCE [GENOMIC DNA]</scope>
</reference>
<reference key="2">
    <citation type="journal article" date="1997" name="Nature">
        <title>The nucleotide sequence of Saccharomyces cerevisiae chromosome IV.</title>
        <authorList>
            <person name="Jacq C."/>
            <person name="Alt-Moerbe J."/>
            <person name="Andre B."/>
            <person name="Arnold W."/>
            <person name="Bahr A."/>
            <person name="Ballesta J.P.G."/>
            <person name="Bargues M."/>
            <person name="Baron L."/>
            <person name="Becker A."/>
            <person name="Biteau N."/>
            <person name="Bloecker H."/>
            <person name="Blugeon C."/>
            <person name="Boskovic J."/>
            <person name="Brandt P."/>
            <person name="Brueckner M."/>
            <person name="Buitrago M.J."/>
            <person name="Coster F."/>
            <person name="Delaveau T."/>
            <person name="del Rey F."/>
            <person name="Dujon B."/>
            <person name="Eide L.G."/>
            <person name="Garcia-Cantalejo J.M."/>
            <person name="Goffeau A."/>
            <person name="Gomez-Peris A."/>
            <person name="Granotier C."/>
            <person name="Hanemann V."/>
            <person name="Hankeln T."/>
            <person name="Hoheisel J.D."/>
            <person name="Jaeger W."/>
            <person name="Jimenez A."/>
            <person name="Jonniaux J.-L."/>
            <person name="Kraemer C."/>
            <person name="Kuester H."/>
            <person name="Laamanen P."/>
            <person name="Legros Y."/>
            <person name="Louis E.J."/>
            <person name="Moeller-Rieker S."/>
            <person name="Monnet A."/>
            <person name="Moro M."/>
            <person name="Mueller-Auer S."/>
            <person name="Nussbaumer B."/>
            <person name="Paricio N."/>
            <person name="Paulin L."/>
            <person name="Perea J."/>
            <person name="Perez-Alonso M."/>
            <person name="Perez-Ortin J.E."/>
            <person name="Pohl T.M."/>
            <person name="Prydz H."/>
            <person name="Purnelle B."/>
            <person name="Rasmussen S.W."/>
            <person name="Remacha M.A."/>
            <person name="Revuelta J.L."/>
            <person name="Rieger M."/>
            <person name="Salom D."/>
            <person name="Saluz H.P."/>
            <person name="Saiz J.E."/>
            <person name="Saren A.-M."/>
            <person name="Schaefer M."/>
            <person name="Scharfe M."/>
            <person name="Schmidt E.R."/>
            <person name="Schneider C."/>
            <person name="Scholler P."/>
            <person name="Schwarz S."/>
            <person name="Soler-Mira A."/>
            <person name="Urrestarazu L.A."/>
            <person name="Verhasselt P."/>
            <person name="Vissers S."/>
            <person name="Voet M."/>
            <person name="Volckaert G."/>
            <person name="Wagner G."/>
            <person name="Wambutt R."/>
            <person name="Wedler E."/>
            <person name="Wedler H."/>
            <person name="Woelfl S."/>
            <person name="Harris D.E."/>
            <person name="Bowman S."/>
            <person name="Brown D."/>
            <person name="Churcher C.M."/>
            <person name="Connor R."/>
            <person name="Dedman K."/>
            <person name="Gentles S."/>
            <person name="Hamlin N."/>
            <person name="Hunt S."/>
            <person name="Jones L."/>
            <person name="McDonald S."/>
            <person name="Murphy L.D."/>
            <person name="Niblett D."/>
            <person name="Odell C."/>
            <person name="Oliver K."/>
            <person name="Rajandream M.A."/>
            <person name="Richards C."/>
            <person name="Shore L."/>
            <person name="Walsh S.V."/>
            <person name="Barrell B.G."/>
            <person name="Dietrich F.S."/>
            <person name="Mulligan J.T."/>
            <person name="Allen E."/>
            <person name="Araujo R."/>
            <person name="Aviles E."/>
            <person name="Berno A."/>
            <person name="Carpenter J."/>
            <person name="Chen E."/>
            <person name="Cherry J.M."/>
            <person name="Chung E."/>
            <person name="Duncan M."/>
            <person name="Hunicke-Smith S."/>
            <person name="Hyman R.W."/>
            <person name="Komp C."/>
            <person name="Lashkari D."/>
            <person name="Lew H."/>
            <person name="Lin D."/>
            <person name="Mosedale D."/>
            <person name="Nakahara K."/>
            <person name="Namath A."/>
            <person name="Oefner P."/>
            <person name="Oh C."/>
            <person name="Petel F.X."/>
            <person name="Roberts D."/>
            <person name="Schramm S."/>
            <person name="Schroeder M."/>
            <person name="Shogren T."/>
            <person name="Shroff N."/>
            <person name="Winant A."/>
            <person name="Yelton M.A."/>
            <person name="Botstein D."/>
            <person name="Davis R.W."/>
            <person name="Johnston M."/>
            <person name="Andrews S."/>
            <person name="Brinkman R."/>
            <person name="Cooper J."/>
            <person name="Ding H."/>
            <person name="Du Z."/>
            <person name="Favello A."/>
            <person name="Fulton L."/>
            <person name="Gattung S."/>
            <person name="Greco T."/>
            <person name="Hallsworth K."/>
            <person name="Hawkins J."/>
            <person name="Hillier L.W."/>
            <person name="Jier M."/>
            <person name="Johnson D."/>
            <person name="Johnston L."/>
            <person name="Kirsten J."/>
            <person name="Kucaba T."/>
            <person name="Langston Y."/>
            <person name="Latreille P."/>
            <person name="Le T."/>
            <person name="Mardis E."/>
            <person name="Menezes S."/>
            <person name="Miller N."/>
            <person name="Nhan M."/>
            <person name="Pauley A."/>
            <person name="Peluso D."/>
            <person name="Rifkin L."/>
            <person name="Riles L."/>
            <person name="Taich A."/>
            <person name="Trevaskis E."/>
            <person name="Vignati D."/>
            <person name="Wilcox L."/>
            <person name="Wohldman P."/>
            <person name="Vaudin M."/>
            <person name="Wilson R."/>
            <person name="Waterston R."/>
            <person name="Albermann K."/>
            <person name="Hani J."/>
            <person name="Heumann K."/>
            <person name="Kleine K."/>
            <person name="Mewes H.-W."/>
            <person name="Zollner A."/>
            <person name="Zaccaria P."/>
        </authorList>
    </citation>
    <scope>NUCLEOTIDE SEQUENCE [LARGE SCALE GENOMIC DNA]</scope>
    <source>
        <strain>ATCC 204508 / S288c</strain>
    </source>
</reference>
<reference key="3">
    <citation type="journal article" date="2014" name="G3 (Bethesda)">
        <title>The reference genome sequence of Saccharomyces cerevisiae: Then and now.</title>
        <authorList>
            <person name="Engel S.R."/>
            <person name="Dietrich F.S."/>
            <person name="Fisk D.G."/>
            <person name="Binkley G."/>
            <person name="Balakrishnan R."/>
            <person name="Costanzo M.C."/>
            <person name="Dwight S.S."/>
            <person name="Hitz B.C."/>
            <person name="Karra K."/>
            <person name="Nash R.S."/>
            <person name="Weng S."/>
            <person name="Wong E.D."/>
            <person name="Lloyd P."/>
            <person name="Skrzypek M.S."/>
            <person name="Miyasato S.R."/>
            <person name="Simison M."/>
            <person name="Cherry J.M."/>
        </authorList>
    </citation>
    <scope>GENOME REANNOTATION</scope>
    <source>
        <strain>ATCC 204508 / S288c</strain>
    </source>
</reference>
<reference key="4">
    <citation type="journal article" date="2007" name="Genome Res.">
        <title>Approaching a complete repository of sequence-verified protein-encoding clones for Saccharomyces cerevisiae.</title>
        <authorList>
            <person name="Hu Y."/>
            <person name="Rolfs A."/>
            <person name="Bhullar B."/>
            <person name="Murthy T.V.S."/>
            <person name="Zhu C."/>
            <person name="Berger M.F."/>
            <person name="Camargo A.A."/>
            <person name="Kelley F."/>
            <person name="McCarron S."/>
            <person name="Jepson D."/>
            <person name="Richardson A."/>
            <person name="Raphael J."/>
            <person name="Moreira D."/>
            <person name="Taycher E."/>
            <person name="Zuo D."/>
            <person name="Mohr S."/>
            <person name="Kane M.F."/>
            <person name="Williamson J."/>
            <person name="Simpson A.J.G."/>
            <person name="Bulyk M.L."/>
            <person name="Harlow E."/>
            <person name="Marsischky G."/>
            <person name="Kolodner R.D."/>
            <person name="LaBaer J."/>
        </authorList>
    </citation>
    <scope>NUCLEOTIDE SEQUENCE [GENOMIC DNA]</scope>
    <source>
        <strain>ATCC 204508 / S288c</strain>
    </source>
</reference>
<reference key="5">
    <citation type="journal article" date="2008" name="Cell Metab.">
        <title>Cooperation of two mRNA-binding proteins drives metabolic adaptation to iron deficiency.</title>
        <authorList>
            <person name="Puig S."/>
            <person name="Vergara S.V."/>
            <person name="Thiele D.J."/>
        </authorList>
    </citation>
    <scope>FUNCTION</scope>
    <scope>INDUCTION</scope>
    <scope>MUTAGENESIS OF CYS-225</scope>
    <scope>MRNA-BINDING</scope>
</reference>